<comment type="function">
    <molecule>Zinc metalloproteinase-disintegrin-like HR1b</molecule>
    <text evidence="6">Zinc protease that induces hemorrhage. Has preference for Tyr, Leu, Arg, Met, and Phe at the P1 position, in descending order (in vitro). Shows equal preference for the sequences of Ala-Asp and Arg-Ile at the P3-P2 position with different enzyme cleavage sites across the P1 position: the N-terminus side for Ala-Asp and the C-terminus side for Arg-Ile.</text>
</comment>
<comment type="function">
    <molecule>Disintegrin-like 1b</molecule>
    <text evidence="1">Inhibits platelet aggregation induced by ADP, thrombin, platelet-activating factor and collagen. Acts by inhibiting fibrinogen interaction with platelet receptors alpha-IIb/beta-3 (ITGA2B/ITGB3).</text>
</comment>
<comment type="cofactor">
    <cofactor evidence="1">
        <name>Zn(2+)</name>
        <dbReference type="ChEBI" id="CHEBI:29105"/>
    </cofactor>
    <text evidence="1">Binds 1 zinc ion per subunit.</text>
</comment>
<comment type="subunit">
    <text evidence="1">Monomer.</text>
</comment>
<comment type="subcellular location">
    <subcellularLocation>
        <location>Secreted</location>
    </subcellularLocation>
</comment>
<comment type="tissue specificity">
    <text>Expressed by the venom gland.</text>
</comment>
<comment type="similarity">
    <text evidence="10">Belongs to the venom metalloproteinase (M12B) family. P-III subfamily. P-IIIb sub-subfamily.</text>
</comment>
<comment type="caution">
    <text evidence="10">Lys-201 is present instead of the conserved Glu which binds a calcium ion.</text>
</comment>
<reference key="1">
    <citation type="journal article" date="2002" name="Toxicon">
        <title>Molecular cloning of HR1a and HR1b, high molecular hemorrhagic factors, from Trimeresurus flavoviridis venom.</title>
        <authorList>
            <person name="Kishimoto M."/>
            <person name="Takahashi T."/>
        </authorList>
    </citation>
    <scope>NUCLEOTIDE SEQUENCE [MRNA]</scope>
    <source>
        <strain>Amami habu</strain>
        <tissue>Venom gland</tissue>
    </source>
</reference>
<reference key="2">
    <citation type="journal article" date="2008" name="Biosci. Biotechnol. Biochem.">
        <title>The occurrence of HR1b in the venom of the snake Okinawa habu (Protobothrops flavoviridis).</title>
        <authorList>
            <person name="Morine N."/>
            <person name="Matsuda S."/>
            <person name="Terada K."/>
            <person name="Iwasaki H."/>
            <person name="Oku H."/>
        </authorList>
    </citation>
    <scope>NUCLEOTIDE SEQUENCE [MRNA]</scope>
    <scope>PROTEIN SEQUENCE OF 281-292; 376-386; 397-404 AND 504-515</scope>
    <scope>CATALYTIC ACTIVITY</scope>
    <scope>VARIANTS OKINAWA HABU VAL-34 AND CYS-313</scope>
    <source>
        <strain>Okinawa habu</strain>
        <tissue>Venom</tissue>
    </source>
</reference>
<reference key="3">
    <citation type="journal article" date="1990" name="J. Biol. Chem.">
        <title>The complete amino acid sequence of the high molecular mass hemorrhagic protein HR1B isolated from the venom of Trimeresurus flavoviridis.</title>
        <authorList>
            <person name="Takeya H."/>
            <person name="Oda K."/>
            <person name="Miyata T."/>
            <person name="Omori-Satoh T."/>
            <person name="Iwanaga S."/>
        </authorList>
    </citation>
    <scope>PROTEIN SEQUENCE OF 192-607</scope>
    <scope>PYROGLUTAMATE FORMATION AT GLN-192</scope>
    <source>
        <strain>Amami habu</strain>
        <tissue>Venom</tissue>
    </source>
</reference>
<reference key="4">
    <citation type="journal article" date="1993" name="J. Biochem.">
        <title>Primary structures of platelet aggregation inhibitors (disintegrins) autoproteolytically released from snake venom hemorrhagic metalloproteinases and new fluorogenic peptide substrates for these enzymes.</title>
        <authorList>
            <person name="Takeya H."/>
            <person name="Nishida S."/>
            <person name="Nishino N."/>
            <person name="Makinose Y."/>
            <person name="Omori-Satoh T."/>
            <person name="Nikai T."/>
            <person name="Sugihara H."/>
            <person name="Iwanaga S."/>
        </authorList>
    </citation>
    <scope>PROTEIN SEQUENCE OF 399-409</scope>
    <source>
        <tissue>Venom</tissue>
    </source>
</reference>
<accession>P20164</accession>
<accession>Q8JIR1</accession>
<keyword id="KW-0106">Calcium</keyword>
<keyword id="KW-1217">Cell adhesion impairing toxin</keyword>
<keyword id="KW-0903">Direct protein sequencing</keyword>
<keyword id="KW-1015">Disulfide bond</keyword>
<keyword id="KW-0325">Glycoprotein</keyword>
<keyword id="KW-1200">Hemorrhagic toxin</keyword>
<keyword id="KW-1199">Hemostasis impairing toxin</keyword>
<keyword id="KW-0378">Hydrolase</keyword>
<keyword id="KW-0479">Metal-binding</keyword>
<keyword id="KW-0482">Metalloprotease</keyword>
<keyword id="KW-1201">Platelet aggregation inhibiting toxin</keyword>
<keyword id="KW-0645">Protease</keyword>
<keyword id="KW-0873">Pyrrolidone carboxylic acid</keyword>
<keyword id="KW-0964">Secreted</keyword>
<keyword id="KW-0732">Signal</keyword>
<keyword id="KW-0800">Toxin</keyword>
<keyword id="KW-0862">Zinc</keyword>
<keyword id="KW-0865">Zymogen</keyword>
<protein>
    <recommendedName>
        <fullName evidence="9">Zinc metalloproteinase-disintegrin-like HR1b</fullName>
        <ecNumber>3.4.24.-</ecNumber>
    </recommendedName>
    <alternativeName>
        <fullName>Snake venom metalloproteinase</fullName>
        <shortName>SVMP</shortName>
    </alternativeName>
    <alternativeName>
        <fullName>Trimerelysin I</fullName>
    </alternativeName>
    <alternativeName>
        <fullName>Trimerelysin-1</fullName>
    </alternativeName>
    <component>
        <recommendedName>
            <fullName>Disintegrin-like 1b</fullName>
        </recommendedName>
    </component>
</protein>
<proteinExistence type="evidence at protein level"/>
<name>VM3HB_PROFL</name>
<organism>
    <name type="scientific">Protobothrops flavoviridis</name>
    <name type="common">Habu</name>
    <name type="synonym">Trimeresurus flavoviridis</name>
    <dbReference type="NCBI Taxonomy" id="88087"/>
    <lineage>
        <taxon>Eukaryota</taxon>
        <taxon>Metazoa</taxon>
        <taxon>Chordata</taxon>
        <taxon>Craniata</taxon>
        <taxon>Vertebrata</taxon>
        <taxon>Euteleostomi</taxon>
        <taxon>Lepidosauria</taxon>
        <taxon>Squamata</taxon>
        <taxon>Bifurcata</taxon>
        <taxon>Unidentata</taxon>
        <taxon>Episquamata</taxon>
        <taxon>Toxicofera</taxon>
        <taxon>Serpentes</taxon>
        <taxon>Colubroidea</taxon>
        <taxon>Viperidae</taxon>
        <taxon>Crotalinae</taxon>
        <taxon>Protobothrops</taxon>
    </lineage>
</organism>
<sequence length="614" mass="69129">MIQVLLVTICLAVFPYQGSSIILESGNVNDYEVMYPQKVAALPKGAVQQKYEDTMQYEFKVNGEPVVLHLEKNKGLFSEDYSETHYSPDGREITTNPPVEDHCYYHGRIQNDADSTASISACNGLKGHFKLQGEMYLIEPLKFSDSEAHAVYKYENVEKEEEAPKMCGVTQTNWESDEPIKKASKLVVTAEQQRFPRRYIKLAIVVDHGIVTKHHGNLKKIRKWIYQLVNTINNIYRSLNILVALVYLEIWSKQNKITVQSASNVTLDLFGDWRESVLLKQRSHDCAQLLTTIDFDGPTIGKAYTASMCDPKRSVGIVQDYSPINLVVAVIMTHEMGHNLGIPHDGNSCTCGGFPCIMSPMISDPPSELFSNCSKAYYQTFLTDHKPQCILNAPSKTDIVSPPVCGNELLEAGEECDCGSPENCQYQCCDAASCKLHSWVKCESGECCDQCRFRTAGTECRAAESECDIPESCTGQSADCPTDRFHRNGQPCLYNHGYCYNGKCPIMFYQCYFLFGSNATVAEDDCFNNNKKGDKYFYCRKENEKYIPCAQEDVKCGRLFCDNKKYPCHYNYSEDLDFGMVDHGTKCADGKVCSNRQCVDVNEAYKSTTVFSLI</sequence>
<feature type="signal peptide" evidence="2">
    <location>
        <begin position="1"/>
        <end position="20"/>
    </location>
</feature>
<feature type="propeptide" id="PRO_0000029022" evidence="7">
    <location>
        <begin position="21"/>
        <end position="191"/>
    </location>
</feature>
<feature type="chain" id="PRO_0000029023" description="Zinc metalloproteinase-disintegrin-like HR1b" evidence="7">
    <location>
        <begin position="192"/>
        <end position="607"/>
    </location>
</feature>
<feature type="propeptide" id="PRO_0000029024" evidence="8">
    <location>
        <begin position="395"/>
        <end position="398"/>
    </location>
</feature>
<feature type="chain" id="PRO_0000029025" description="Disintegrin-like 1b">
    <location>
        <begin position="399"/>
        <end position="490"/>
    </location>
</feature>
<feature type="propeptide" id="PRO_0000029026">
    <location>
        <begin position="608"/>
        <end position="614"/>
    </location>
</feature>
<feature type="domain" description="Peptidase M12B" evidence="4">
    <location>
        <begin position="198"/>
        <end position="394"/>
    </location>
</feature>
<feature type="domain" description="Disintegrin" evidence="3">
    <location>
        <begin position="402"/>
        <end position="488"/>
    </location>
</feature>
<feature type="short sequence motif" description="D/ECD-tripeptide">
    <location>
        <begin position="466"/>
        <end position="468"/>
    </location>
</feature>
<feature type="active site" evidence="4 5">
    <location>
        <position position="335"/>
    </location>
</feature>
<feature type="binding site" evidence="1">
    <location>
        <position position="334"/>
    </location>
    <ligand>
        <name>Zn(2+)</name>
        <dbReference type="ChEBI" id="CHEBI:29105"/>
        <note>catalytic</note>
    </ligand>
</feature>
<feature type="binding site" evidence="1">
    <location>
        <position position="338"/>
    </location>
    <ligand>
        <name>Zn(2+)</name>
        <dbReference type="ChEBI" id="CHEBI:29105"/>
        <note>catalytic</note>
    </ligand>
</feature>
<feature type="binding site" evidence="1">
    <location>
        <position position="344"/>
    </location>
    <ligand>
        <name>Zn(2+)</name>
        <dbReference type="ChEBI" id="CHEBI:29105"/>
        <note>catalytic</note>
    </ligand>
</feature>
<feature type="binding site" evidence="1">
    <location>
        <position position="404"/>
    </location>
    <ligand>
        <name>Ca(2+)</name>
        <dbReference type="ChEBI" id="CHEBI:29108"/>
    </ligand>
</feature>
<feature type="binding site" evidence="1">
    <location>
        <position position="407"/>
    </location>
    <ligand>
        <name>Ca(2+)</name>
        <dbReference type="ChEBI" id="CHEBI:29108"/>
    </ligand>
</feature>
<feature type="binding site" evidence="1">
    <location>
        <position position="409"/>
    </location>
    <ligand>
        <name>Ca(2+)</name>
        <dbReference type="ChEBI" id="CHEBI:29108"/>
    </ligand>
</feature>
<feature type="binding site" evidence="1">
    <location>
        <position position="411"/>
    </location>
    <ligand>
        <name>Ca(2+)</name>
        <dbReference type="ChEBI" id="CHEBI:29108"/>
    </ligand>
</feature>
<feature type="binding site" evidence="1">
    <location>
        <position position="414"/>
    </location>
    <ligand>
        <name>Ca(2+)</name>
        <dbReference type="ChEBI" id="CHEBI:29108"/>
    </ligand>
</feature>
<feature type="binding site" evidence="1">
    <location>
        <position position="417"/>
    </location>
    <ligand>
        <name>Ca(2+)</name>
        <dbReference type="ChEBI" id="CHEBI:29108"/>
    </ligand>
</feature>
<feature type="modified residue" description="Pyrrolidone carboxylic acid" evidence="7">
    <location>
        <position position="192"/>
    </location>
</feature>
<feature type="glycosylation site" description="N-linked (GlcNAc...) asparagine">
    <location>
        <position position="264"/>
    </location>
</feature>
<feature type="glycosylation site" description="N-linked (GlcNAc...) asparagine">
    <location>
        <position position="372"/>
    </location>
</feature>
<feature type="glycosylation site" description="N-linked (GlcNAc...) asparagine">
    <location>
        <position position="518"/>
    </location>
</feature>
<feature type="glycosylation site" description="N-linked (GlcNAc...) asparagine">
    <location>
        <position position="571"/>
    </location>
</feature>
<feature type="disulfide bond" description="In zinc metalloproteinase-disintegrin-like HR1b" evidence="1">
    <location>
        <begin position="309"/>
        <end position="389"/>
    </location>
</feature>
<feature type="disulfide bond" description="In zinc metalloproteinase-disintegrin-like HR1b" evidence="1">
    <location>
        <begin position="349"/>
        <end position="373"/>
    </location>
</feature>
<feature type="disulfide bond" description="In zinc metalloproteinase-disintegrin-like HR1b" evidence="1">
    <location>
        <begin position="351"/>
        <end position="356"/>
    </location>
</feature>
<feature type="disulfide bond" description="In zinc metalloproteinase-disintegrin-like HR1b; alternate" evidence="1">
    <location>
        <begin position="405"/>
        <end position="434"/>
    </location>
</feature>
<feature type="disulfide bond" description="In disintegrin-like 1b; alternate" evidence="1">
    <location>
        <begin position="405"/>
        <end position="424"/>
    </location>
</feature>
<feature type="disulfide bond" description="In disintegrin-like 1b; alternate" evidence="1">
    <location>
        <begin position="416"/>
        <end position="434"/>
    </location>
</feature>
<feature type="disulfide bond" description="In zinc metalloproteinase-disintegrin-like HR1b; alternate" evidence="1">
    <location>
        <begin position="416"/>
        <end position="429"/>
    </location>
</feature>
<feature type="disulfide bond" description="In zinc metalloproteinase-disintegrin-like HR1b; alternate" evidence="1">
    <location>
        <begin position="418"/>
        <end position="424"/>
    </location>
</feature>
<feature type="disulfide bond" description="In zinc metalloproteinase-disintegrin-like HR1b" evidence="1">
    <location>
        <begin position="428"/>
        <end position="451"/>
    </location>
</feature>
<feature type="disulfide bond" description="In zinc metalloproteinase-disintegrin-like HR1b" evidence="1">
    <location>
        <begin position="442"/>
        <end position="448"/>
    </location>
</feature>
<feature type="disulfide bond" description="In zinc metalloproteinase-disintegrin-like HR1b" evidence="1">
    <location>
        <begin position="447"/>
        <end position="473"/>
    </location>
</feature>
<feature type="disulfide bond" description="In both disintegrin-like 1b and zinc metalloproteinase-disintegrin-like HR1b" evidence="3 4">
    <location>
        <begin position="460"/>
        <end position="480"/>
    </location>
</feature>
<feature type="disulfide bond" description="In zinc metalloproteinase-disintegrin-like HR1b; alternate" evidence="1">
    <location>
        <begin position="467"/>
        <end position="499"/>
    </location>
</feature>
<feature type="disulfide bond" description="In disintegrin-like 1b; alternate" evidence="1">
    <location>
        <begin position="467"/>
        <end position="492"/>
    </location>
</feature>
<feature type="disulfide bond" description="In zinc metalloproteinase-disintegrin-like HR1b; alternate" evidence="1">
    <location>
        <begin position="492"/>
        <end position="504"/>
    </location>
</feature>
<feature type="disulfide bond" description="In disintegrin-like 1b" evidence="1">
    <location>
        <begin position="499"/>
        <end position="504"/>
    </location>
</feature>
<feature type="disulfide bond" description="In zinc metalloproteinase-disintegrin-like HR1b; alternate" evidence="1">
    <location>
        <begin position="511"/>
        <end position="561"/>
    </location>
</feature>
<feature type="disulfide bond" description="In disintegrin-like 1b; alternate" evidence="1">
    <location>
        <begin position="511"/>
        <end position="526"/>
    </location>
</feature>
<feature type="disulfide bond" description="In zinc metalloproteinase-disintegrin-like HR1b; alternate" evidence="1">
    <location>
        <begin position="526"/>
        <end position="568"/>
    </location>
</feature>
<feature type="disulfide bond" description="In zinc metalloproteinase-disintegrin-like HR1b; alternate" evidence="1">
    <location>
        <begin position="539"/>
        <end position="549"/>
    </location>
</feature>
<feature type="disulfide bond" description="In disintegrin-like 1b; alternate" evidence="1">
    <location>
        <begin position="549"/>
        <end position="556"/>
    </location>
</feature>
<feature type="disulfide bond" description="In zinc metalloproteinase-disintegrin-like HR1b; alternate" evidence="1">
    <location>
        <begin position="556"/>
        <end position="593"/>
    </location>
</feature>
<feature type="disulfide bond" description="In disintegrin-like 1b" evidence="1">
    <location>
        <begin position="561"/>
        <end position="568"/>
    </location>
</feature>
<feature type="disulfide bond" description="In zinc metalloproteinase-disintegrin-like HR1b; alternate" evidence="1">
    <location>
        <begin position="587"/>
        <end position="598"/>
    </location>
</feature>
<feature type="disulfide bond" description="In disintegrin-like 1b" evidence="1">
    <location>
        <begin position="593"/>
        <end position="598"/>
    </location>
</feature>
<feature type="sequence variant" description="In Okinawa habu." evidence="6">
    <original>M</original>
    <variation>V</variation>
    <location>
        <position position="34"/>
    </location>
</feature>
<feature type="sequence variant" description="In Okinawa habu." evidence="6">
    <original>R</original>
    <variation>C</variation>
    <location>
        <position position="313"/>
    </location>
</feature>
<evidence type="ECO:0000250" key="1"/>
<evidence type="ECO:0000255" key="2"/>
<evidence type="ECO:0000255" key="3">
    <source>
        <dbReference type="PROSITE-ProRule" id="PRU00068"/>
    </source>
</evidence>
<evidence type="ECO:0000255" key="4">
    <source>
        <dbReference type="PROSITE-ProRule" id="PRU00276"/>
    </source>
</evidence>
<evidence type="ECO:0000255" key="5">
    <source>
        <dbReference type="PROSITE-ProRule" id="PRU10095"/>
    </source>
</evidence>
<evidence type="ECO:0000269" key="6">
    <source>
    </source>
</evidence>
<evidence type="ECO:0000269" key="7">
    <source>
    </source>
</evidence>
<evidence type="ECO:0000269" key="8">
    <source>
    </source>
</evidence>
<evidence type="ECO:0000303" key="9">
    <source>
    </source>
</evidence>
<evidence type="ECO:0000305" key="10"/>
<dbReference type="EC" id="3.4.24.-"/>
<dbReference type="EMBL" id="AB074144">
    <property type="protein sequence ID" value="BAB92014.1"/>
    <property type="molecule type" value="mRNA"/>
</dbReference>
<dbReference type="PIR" id="A37877">
    <property type="entry name" value="A37877"/>
</dbReference>
<dbReference type="SMR" id="P20164"/>
<dbReference type="MEROPS" id="M12.154"/>
<dbReference type="KEGG" id="ag:BAB92014"/>
<dbReference type="GO" id="GO:0005576">
    <property type="term" value="C:extracellular region"/>
    <property type="evidence" value="ECO:0007669"/>
    <property type="project" value="UniProtKB-SubCell"/>
</dbReference>
<dbReference type="GO" id="GO:0005886">
    <property type="term" value="C:plasma membrane"/>
    <property type="evidence" value="ECO:0007669"/>
    <property type="project" value="TreeGrafter"/>
</dbReference>
<dbReference type="GO" id="GO:0046872">
    <property type="term" value="F:metal ion binding"/>
    <property type="evidence" value="ECO:0007669"/>
    <property type="project" value="UniProtKB-KW"/>
</dbReference>
<dbReference type="GO" id="GO:0004222">
    <property type="term" value="F:metalloendopeptidase activity"/>
    <property type="evidence" value="ECO:0007669"/>
    <property type="project" value="InterPro"/>
</dbReference>
<dbReference type="GO" id="GO:0090729">
    <property type="term" value="F:toxin activity"/>
    <property type="evidence" value="ECO:0007669"/>
    <property type="project" value="UniProtKB-KW"/>
</dbReference>
<dbReference type="GO" id="GO:0006508">
    <property type="term" value="P:proteolysis"/>
    <property type="evidence" value="ECO:0007669"/>
    <property type="project" value="UniProtKB-KW"/>
</dbReference>
<dbReference type="CDD" id="cd04269">
    <property type="entry name" value="ZnMc_adamalysin_II_like"/>
    <property type="match status" value="1"/>
</dbReference>
<dbReference type="FunFam" id="3.40.390.10:FF:000002">
    <property type="entry name" value="Disintegrin and metalloproteinase domain-containing protein 22"/>
    <property type="match status" value="1"/>
</dbReference>
<dbReference type="FunFam" id="4.10.70.10:FF:000001">
    <property type="entry name" value="Disintegrin and metalloproteinase domain-containing protein 22"/>
    <property type="match status" value="1"/>
</dbReference>
<dbReference type="Gene3D" id="3.40.390.10">
    <property type="entry name" value="Collagenase (Catalytic Domain)"/>
    <property type="match status" value="1"/>
</dbReference>
<dbReference type="Gene3D" id="4.10.70.10">
    <property type="entry name" value="Disintegrin domain"/>
    <property type="match status" value="1"/>
</dbReference>
<dbReference type="InterPro" id="IPR006586">
    <property type="entry name" value="ADAM_Cys-rich"/>
</dbReference>
<dbReference type="InterPro" id="IPR018358">
    <property type="entry name" value="Disintegrin_CS"/>
</dbReference>
<dbReference type="InterPro" id="IPR001762">
    <property type="entry name" value="Disintegrin_dom"/>
</dbReference>
<dbReference type="InterPro" id="IPR036436">
    <property type="entry name" value="Disintegrin_dom_sf"/>
</dbReference>
<dbReference type="InterPro" id="IPR024079">
    <property type="entry name" value="MetalloPept_cat_dom_sf"/>
</dbReference>
<dbReference type="InterPro" id="IPR001590">
    <property type="entry name" value="Peptidase_M12B"/>
</dbReference>
<dbReference type="InterPro" id="IPR002870">
    <property type="entry name" value="Peptidase_M12B_N"/>
</dbReference>
<dbReference type="InterPro" id="IPR034027">
    <property type="entry name" value="Reprolysin_adamalysin"/>
</dbReference>
<dbReference type="PANTHER" id="PTHR11905">
    <property type="entry name" value="ADAM A DISINTEGRIN AND METALLOPROTEASE DOMAIN"/>
    <property type="match status" value="1"/>
</dbReference>
<dbReference type="PANTHER" id="PTHR11905:SF32">
    <property type="entry name" value="DISINTEGRIN AND METALLOPROTEINASE DOMAIN-CONTAINING PROTEIN 28"/>
    <property type="match status" value="1"/>
</dbReference>
<dbReference type="Pfam" id="PF08516">
    <property type="entry name" value="ADAM_CR"/>
    <property type="match status" value="1"/>
</dbReference>
<dbReference type="Pfam" id="PF00200">
    <property type="entry name" value="Disintegrin"/>
    <property type="match status" value="1"/>
</dbReference>
<dbReference type="Pfam" id="PF01562">
    <property type="entry name" value="Pep_M12B_propep"/>
    <property type="match status" value="1"/>
</dbReference>
<dbReference type="Pfam" id="PF01421">
    <property type="entry name" value="Reprolysin"/>
    <property type="match status" value="1"/>
</dbReference>
<dbReference type="PRINTS" id="PR00289">
    <property type="entry name" value="DISINTEGRIN"/>
</dbReference>
<dbReference type="SMART" id="SM00608">
    <property type="entry name" value="ACR"/>
    <property type="match status" value="1"/>
</dbReference>
<dbReference type="SMART" id="SM00050">
    <property type="entry name" value="DISIN"/>
    <property type="match status" value="1"/>
</dbReference>
<dbReference type="SUPFAM" id="SSF57552">
    <property type="entry name" value="Blood coagulation inhibitor (disintegrin)"/>
    <property type="match status" value="1"/>
</dbReference>
<dbReference type="SUPFAM" id="SSF55486">
    <property type="entry name" value="Metalloproteases ('zincins'), catalytic domain"/>
    <property type="match status" value="1"/>
</dbReference>
<dbReference type="PROSITE" id="PS50215">
    <property type="entry name" value="ADAM_MEPRO"/>
    <property type="match status" value="1"/>
</dbReference>
<dbReference type="PROSITE" id="PS00427">
    <property type="entry name" value="DISINTEGRIN_1"/>
    <property type="match status" value="1"/>
</dbReference>
<dbReference type="PROSITE" id="PS50214">
    <property type="entry name" value="DISINTEGRIN_2"/>
    <property type="match status" value="1"/>
</dbReference>
<dbReference type="PROSITE" id="PS00142">
    <property type="entry name" value="ZINC_PROTEASE"/>
    <property type="match status" value="1"/>
</dbReference>